<dbReference type="EMBL" id="CP001154">
    <property type="protein sequence ID" value="ACO73537.1"/>
    <property type="molecule type" value="Genomic_DNA"/>
</dbReference>
<dbReference type="RefSeq" id="WP_012696029.1">
    <property type="nucleotide sequence ID" value="NC_012559.1"/>
</dbReference>
<dbReference type="SMR" id="C1DCC0"/>
<dbReference type="STRING" id="557598.LHK_00544"/>
<dbReference type="GeneID" id="75109304"/>
<dbReference type="KEGG" id="lhk:LHK_00544"/>
<dbReference type="eggNOG" id="COG0227">
    <property type="taxonomic scope" value="Bacteria"/>
</dbReference>
<dbReference type="HOGENOM" id="CLU_064548_3_1_4"/>
<dbReference type="Proteomes" id="UP000002010">
    <property type="component" value="Chromosome"/>
</dbReference>
<dbReference type="GO" id="GO:0022625">
    <property type="term" value="C:cytosolic large ribosomal subunit"/>
    <property type="evidence" value="ECO:0007669"/>
    <property type="project" value="TreeGrafter"/>
</dbReference>
<dbReference type="GO" id="GO:0003735">
    <property type="term" value="F:structural constituent of ribosome"/>
    <property type="evidence" value="ECO:0007669"/>
    <property type="project" value="InterPro"/>
</dbReference>
<dbReference type="GO" id="GO:0006412">
    <property type="term" value="P:translation"/>
    <property type="evidence" value="ECO:0007669"/>
    <property type="project" value="UniProtKB-UniRule"/>
</dbReference>
<dbReference type="FunFam" id="2.30.170.40:FF:000001">
    <property type="entry name" value="50S ribosomal protein L28"/>
    <property type="match status" value="1"/>
</dbReference>
<dbReference type="Gene3D" id="2.30.170.40">
    <property type="entry name" value="Ribosomal protein L28/L24"/>
    <property type="match status" value="1"/>
</dbReference>
<dbReference type="HAMAP" id="MF_00373">
    <property type="entry name" value="Ribosomal_bL28"/>
    <property type="match status" value="1"/>
</dbReference>
<dbReference type="InterPro" id="IPR026569">
    <property type="entry name" value="Ribosomal_bL28"/>
</dbReference>
<dbReference type="InterPro" id="IPR034704">
    <property type="entry name" value="Ribosomal_bL28/bL31-like_sf"/>
</dbReference>
<dbReference type="InterPro" id="IPR001383">
    <property type="entry name" value="Ribosomal_bL28_bact-type"/>
</dbReference>
<dbReference type="InterPro" id="IPR037147">
    <property type="entry name" value="Ribosomal_bL28_sf"/>
</dbReference>
<dbReference type="NCBIfam" id="TIGR00009">
    <property type="entry name" value="L28"/>
    <property type="match status" value="1"/>
</dbReference>
<dbReference type="PANTHER" id="PTHR13528">
    <property type="entry name" value="39S RIBOSOMAL PROTEIN L28, MITOCHONDRIAL"/>
    <property type="match status" value="1"/>
</dbReference>
<dbReference type="PANTHER" id="PTHR13528:SF2">
    <property type="entry name" value="LARGE RIBOSOMAL SUBUNIT PROTEIN BL28M"/>
    <property type="match status" value="1"/>
</dbReference>
<dbReference type="Pfam" id="PF00830">
    <property type="entry name" value="Ribosomal_L28"/>
    <property type="match status" value="1"/>
</dbReference>
<dbReference type="SUPFAM" id="SSF143800">
    <property type="entry name" value="L28p-like"/>
    <property type="match status" value="1"/>
</dbReference>
<feature type="chain" id="PRO_1000195928" description="Large ribosomal subunit protein bL28">
    <location>
        <begin position="1"/>
        <end position="77"/>
    </location>
</feature>
<proteinExistence type="inferred from homology"/>
<gene>
    <name evidence="1" type="primary">rpmB</name>
    <name type="ordered locus">LHK_00544</name>
</gene>
<keyword id="KW-1185">Reference proteome</keyword>
<keyword id="KW-0687">Ribonucleoprotein</keyword>
<keyword id="KW-0689">Ribosomal protein</keyword>
<accession>C1DCC0</accession>
<comment type="similarity">
    <text evidence="1">Belongs to the bacterial ribosomal protein bL28 family.</text>
</comment>
<name>RL28_LARHH</name>
<organism>
    <name type="scientific">Laribacter hongkongensis (strain HLHK9)</name>
    <dbReference type="NCBI Taxonomy" id="557598"/>
    <lineage>
        <taxon>Bacteria</taxon>
        <taxon>Pseudomonadati</taxon>
        <taxon>Pseudomonadota</taxon>
        <taxon>Betaproteobacteria</taxon>
        <taxon>Neisseriales</taxon>
        <taxon>Aquaspirillaceae</taxon>
        <taxon>Laribacter</taxon>
    </lineage>
</organism>
<sequence length="77" mass="8938">MARVCKVTGKRPMVGNNVSHANNKTKRRFLPNLQYRRFWVESENRWVRMRVSNAALRTIDKVGIDAVLADLRARGEI</sequence>
<reference key="1">
    <citation type="journal article" date="2009" name="PLoS Genet.">
        <title>The complete genome and proteome of Laribacter hongkongensis reveal potential mechanisms for adaptations to different temperatures and habitats.</title>
        <authorList>
            <person name="Woo P.C.Y."/>
            <person name="Lau S.K.P."/>
            <person name="Tse H."/>
            <person name="Teng J.L.L."/>
            <person name="Curreem S.O."/>
            <person name="Tsang A.K.L."/>
            <person name="Fan R.Y.Y."/>
            <person name="Wong G.K.M."/>
            <person name="Huang Y."/>
            <person name="Loman N.J."/>
            <person name="Snyder L.A.S."/>
            <person name="Cai J.J."/>
            <person name="Huang J.-D."/>
            <person name="Mak W."/>
            <person name="Pallen M.J."/>
            <person name="Lok S."/>
            <person name="Yuen K.-Y."/>
        </authorList>
    </citation>
    <scope>NUCLEOTIDE SEQUENCE [LARGE SCALE GENOMIC DNA]</scope>
    <source>
        <strain>HLHK9</strain>
    </source>
</reference>
<protein>
    <recommendedName>
        <fullName evidence="1">Large ribosomal subunit protein bL28</fullName>
    </recommendedName>
    <alternativeName>
        <fullName evidence="2">50S ribosomal protein L28</fullName>
    </alternativeName>
</protein>
<evidence type="ECO:0000255" key="1">
    <source>
        <dbReference type="HAMAP-Rule" id="MF_00373"/>
    </source>
</evidence>
<evidence type="ECO:0000305" key="2"/>